<name>ATP23_PICST</name>
<gene>
    <name type="primary">ATP23</name>
    <name type="ORF">PICST_33116</name>
</gene>
<evidence type="ECO:0000250" key="1"/>
<evidence type="ECO:0000255" key="2">
    <source>
        <dbReference type="PROSITE-ProRule" id="PRU10095"/>
    </source>
</evidence>
<evidence type="ECO:0000305" key="3"/>
<comment type="function">
    <text evidence="1">Has a dual role in the assembly of mitochondrial ATPase. Acts as a protease that removes N-terminal residues of mitochondrial ATPase CF(0) subunit 6 at the intermembrane space side. Also involved in the correct assembly of the membrane-embedded ATPase CF(0) particle, probably mediating association of subunit 6 with the subunit 9 ring (By similarity).</text>
</comment>
<comment type="subcellular location">
    <subcellularLocation>
        <location>Mitochondrion inner membrane</location>
        <topology>Peripheral membrane protein</topology>
        <orientation>Intermembrane side</orientation>
    </subcellularLocation>
    <text evidence="1">Associates loosely with the inner membrane.</text>
</comment>
<comment type="similarity">
    <text evidence="3">Belongs to the peptidase M76 family.</text>
</comment>
<accession>A3LYB6</accession>
<dbReference type="EC" id="3.4.24.-"/>
<dbReference type="EMBL" id="CP000500">
    <property type="protein sequence ID" value="ABN67955.2"/>
    <property type="molecule type" value="Genomic_DNA"/>
</dbReference>
<dbReference type="RefSeq" id="XP_001385984.2">
    <property type="nucleotide sequence ID" value="XM_001385947.1"/>
</dbReference>
<dbReference type="FunCoup" id="A3LYB6">
    <property type="interactions" value="500"/>
</dbReference>
<dbReference type="STRING" id="322104.A3LYB6"/>
<dbReference type="MEROPS" id="M76.001"/>
<dbReference type="MEROPS" id="M76.002"/>
<dbReference type="GeneID" id="4840218"/>
<dbReference type="KEGG" id="pic:PICST_33116"/>
<dbReference type="eggNOG" id="KOG3314">
    <property type="taxonomic scope" value="Eukaryota"/>
</dbReference>
<dbReference type="HOGENOM" id="CLU_079125_0_0_1"/>
<dbReference type="InParanoid" id="A3LYB6"/>
<dbReference type="OMA" id="EAHQNCV"/>
<dbReference type="OrthoDB" id="285308at2759"/>
<dbReference type="Proteomes" id="UP000002258">
    <property type="component" value="Chromosome 6"/>
</dbReference>
<dbReference type="GO" id="GO:0005743">
    <property type="term" value="C:mitochondrial inner membrane"/>
    <property type="evidence" value="ECO:0007669"/>
    <property type="project" value="UniProtKB-SubCell"/>
</dbReference>
<dbReference type="GO" id="GO:0046872">
    <property type="term" value="F:metal ion binding"/>
    <property type="evidence" value="ECO:0007669"/>
    <property type="project" value="UniProtKB-KW"/>
</dbReference>
<dbReference type="GO" id="GO:0004222">
    <property type="term" value="F:metalloendopeptidase activity"/>
    <property type="evidence" value="ECO:0007669"/>
    <property type="project" value="InterPro"/>
</dbReference>
<dbReference type="GO" id="GO:0034982">
    <property type="term" value="P:mitochondrial protein processing"/>
    <property type="evidence" value="ECO:0007669"/>
    <property type="project" value="TreeGrafter"/>
</dbReference>
<dbReference type="GO" id="GO:0033615">
    <property type="term" value="P:mitochondrial proton-transporting ATP synthase complex assembly"/>
    <property type="evidence" value="ECO:0007669"/>
    <property type="project" value="TreeGrafter"/>
</dbReference>
<dbReference type="InterPro" id="IPR019165">
    <property type="entry name" value="Peptidase_M76_ATP23"/>
</dbReference>
<dbReference type="PANTHER" id="PTHR21711">
    <property type="entry name" value="MITOCHONDRIAL INNER MEMBRANE PROTEASE"/>
    <property type="match status" value="1"/>
</dbReference>
<dbReference type="PANTHER" id="PTHR21711:SF0">
    <property type="entry name" value="MITOCHONDRIAL INNER MEMBRANE PROTEASE ATP23 HOMOLOG"/>
    <property type="match status" value="1"/>
</dbReference>
<dbReference type="Pfam" id="PF09768">
    <property type="entry name" value="Peptidase_M76"/>
    <property type="match status" value="1"/>
</dbReference>
<dbReference type="PROSITE" id="PS00142">
    <property type="entry name" value="ZINC_PROTEASE"/>
    <property type="match status" value="1"/>
</dbReference>
<keyword id="KW-0378">Hydrolase</keyword>
<keyword id="KW-0472">Membrane</keyword>
<keyword id="KW-0479">Metal-binding</keyword>
<keyword id="KW-0482">Metalloprotease</keyword>
<keyword id="KW-0496">Mitochondrion</keyword>
<keyword id="KW-0999">Mitochondrion inner membrane</keyword>
<keyword id="KW-0645">Protease</keyword>
<keyword id="KW-1185">Reference proteome</keyword>
<organism>
    <name type="scientific">Scheffersomyces stipitis (strain ATCC 58785 / CBS 6054 / NBRC 10063 / NRRL Y-11545)</name>
    <name type="common">Yeast</name>
    <name type="synonym">Pichia stipitis</name>
    <dbReference type="NCBI Taxonomy" id="322104"/>
    <lineage>
        <taxon>Eukaryota</taxon>
        <taxon>Fungi</taxon>
        <taxon>Dikarya</taxon>
        <taxon>Ascomycota</taxon>
        <taxon>Saccharomycotina</taxon>
        <taxon>Pichiomycetes</taxon>
        <taxon>Debaryomycetaceae</taxon>
        <taxon>Scheffersomyces</taxon>
    </lineage>
</organism>
<protein>
    <recommendedName>
        <fullName>Mitochondrial inner membrane protease ATP23</fullName>
        <ecNumber>3.4.24.-</ecNumber>
    </recommendedName>
</protein>
<sequence>MSAVPNAVIPNPDNLSVSAPEKLSGFEWWRRSLQYRTGMGLDPQEKAQFEFDYQHKYLPQQCNSCIEFRDWMLTYSPSVTFMMDHIKKLSPNKEQILNKSNIICDVCDDLKGGGFHPQEGILLCANRIQSKWQLEDILTHELVHVYDHLKFQVNLNDLKHHACTEIRASMLSGECRIFNEIKKTGLGDFGKKFQSCIKRRAILSVSANPICKDSEEAEKVVNSVWQSCFNDTRPFERVYR</sequence>
<reference key="1">
    <citation type="journal article" date="2007" name="Nat. Biotechnol.">
        <title>Genome sequence of the lignocellulose-bioconverting and xylose-fermenting yeast Pichia stipitis.</title>
        <authorList>
            <person name="Jeffries T.W."/>
            <person name="Grigoriev I.V."/>
            <person name="Grimwood J."/>
            <person name="Laplaza J.M."/>
            <person name="Aerts A."/>
            <person name="Salamov A."/>
            <person name="Schmutz J."/>
            <person name="Lindquist E."/>
            <person name="Dehal P."/>
            <person name="Shapiro H."/>
            <person name="Jin Y.-S."/>
            <person name="Passoth V."/>
            <person name="Richardson P.M."/>
        </authorList>
    </citation>
    <scope>NUCLEOTIDE SEQUENCE [LARGE SCALE GENOMIC DNA]</scope>
    <source>
        <strain>ATCC 58785 / CBS 6054 / NBRC 10063 / NRRL Y-11545</strain>
    </source>
</reference>
<proteinExistence type="inferred from homology"/>
<feature type="chain" id="PRO_0000330071" description="Mitochondrial inner membrane protease ATP23">
    <location>
        <begin position="1"/>
        <end position="240"/>
    </location>
</feature>
<feature type="active site" evidence="2">
    <location>
        <position position="141"/>
    </location>
</feature>
<feature type="binding site" evidence="1">
    <location>
        <position position="140"/>
    </location>
    <ligand>
        <name>a divalent metal cation</name>
        <dbReference type="ChEBI" id="CHEBI:60240"/>
        <note>catalytic</note>
    </ligand>
</feature>
<feature type="binding site" evidence="1">
    <location>
        <position position="144"/>
    </location>
    <ligand>
        <name>a divalent metal cation</name>
        <dbReference type="ChEBI" id="CHEBI:60240"/>
        <note>catalytic</note>
    </ligand>
</feature>